<organism>
    <name type="scientific">Bos taurus</name>
    <name type="common">Bovine</name>
    <dbReference type="NCBI Taxonomy" id="9913"/>
    <lineage>
        <taxon>Eukaryota</taxon>
        <taxon>Metazoa</taxon>
        <taxon>Chordata</taxon>
        <taxon>Craniata</taxon>
        <taxon>Vertebrata</taxon>
        <taxon>Euteleostomi</taxon>
        <taxon>Mammalia</taxon>
        <taxon>Eutheria</taxon>
        <taxon>Laurasiatheria</taxon>
        <taxon>Artiodactyla</taxon>
        <taxon>Ruminantia</taxon>
        <taxon>Pecora</taxon>
        <taxon>Bovidae</taxon>
        <taxon>Bovinae</taxon>
        <taxon>Bos</taxon>
    </lineage>
</organism>
<evidence type="ECO:0000250" key="1">
    <source>
        <dbReference type="UniProtKB" id="O75439"/>
    </source>
</evidence>
<evidence type="ECO:0000250" key="2">
    <source>
        <dbReference type="UniProtKB" id="P10507"/>
    </source>
</evidence>
<evidence type="ECO:0000250" key="3">
    <source>
        <dbReference type="UniProtKB" id="Q03346"/>
    </source>
</evidence>
<evidence type="ECO:0000255" key="4">
    <source>
        <dbReference type="PROSITE-ProRule" id="PRU10096"/>
    </source>
</evidence>
<evidence type="ECO:0000305" key="5"/>
<gene>
    <name type="primary">PMPCB</name>
</gene>
<comment type="function">
    <text evidence="1 3">Catalytic subunit of the essential mitochondrial processing protease (MPP), which cleaves the mitochondrial sequence off newly imported precursors proteins (By similarity). Preferentially, cleaves after an arginine at position P2 (By similarity). Required for PINK1 turnover by coupling PINK1 mitochondrial import and cleavage, which results in subsequent PINK1 proteolysis (By similarity).</text>
</comment>
<comment type="catalytic activity">
    <reaction evidence="3">
        <text>Release of N-terminal transit peptides from precursor proteins imported into the mitochondrion, typically with Arg in position P2.</text>
        <dbReference type="EC" id="3.4.24.64"/>
    </reaction>
</comment>
<comment type="cofactor">
    <cofactor evidence="2">
        <name>Zn(2+)</name>
        <dbReference type="ChEBI" id="CHEBI:29105"/>
    </cofactor>
    <text evidence="2">Binds 1 zinc ion per subunit.</text>
</comment>
<comment type="activity regulation">
    <text evidence="2">Binding to PMPCA is required for catalytic activity.</text>
</comment>
<comment type="subunit">
    <text evidence="2">Heterodimer of PMPCA (alpha) and PMPCB (beta) subunits, forming the mitochondrial processing protease (MPP) in which PMPCA is involved in substrate recognition and binding and PMPCB is the catalytic subunit.</text>
</comment>
<comment type="subcellular location">
    <subcellularLocation>
        <location evidence="1">Mitochondrion matrix</location>
    </subcellularLocation>
</comment>
<comment type="similarity">
    <text evidence="5">Belongs to the peptidase M16 family.</text>
</comment>
<accession>Q3SZ71</accession>
<proteinExistence type="evidence at transcript level"/>
<name>MPPB_BOVIN</name>
<dbReference type="EC" id="3.4.24.64" evidence="3"/>
<dbReference type="EMBL" id="BC103085">
    <property type="protein sequence ID" value="AAI03086.1"/>
    <property type="molecule type" value="mRNA"/>
</dbReference>
<dbReference type="RefSeq" id="NP_001029785.1">
    <property type="nucleotide sequence ID" value="NM_001034613.1"/>
</dbReference>
<dbReference type="SMR" id="Q3SZ71"/>
<dbReference type="FunCoup" id="Q3SZ71">
    <property type="interactions" value="3852"/>
</dbReference>
<dbReference type="STRING" id="9913.ENSBTAP00000004922"/>
<dbReference type="MEROPS" id="M16.973"/>
<dbReference type="PaxDb" id="9913-ENSBTAP00000004922"/>
<dbReference type="GeneID" id="534546"/>
<dbReference type="KEGG" id="bta:534546"/>
<dbReference type="CTD" id="9512"/>
<dbReference type="eggNOG" id="KOG0960">
    <property type="taxonomic scope" value="Eukaryota"/>
</dbReference>
<dbReference type="InParanoid" id="Q3SZ71"/>
<dbReference type="OrthoDB" id="10251424at2759"/>
<dbReference type="Proteomes" id="UP000009136">
    <property type="component" value="Unplaced"/>
</dbReference>
<dbReference type="GO" id="GO:0005759">
    <property type="term" value="C:mitochondrial matrix"/>
    <property type="evidence" value="ECO:0007669"/>
    <property type="project" value="UniProtKB-SubCell"/>
</dbReference>
<dbReference type="GO" id="GO:0005739">
    <property type="term" value="C:mitochondrion"/>
    <property type="evidence" value="ECO:0000318"/>
    <property type="project" value="GO_Central"/>
</dbReference>
<dbReference type="GO" id="GO:0046872">
    <property type="term" value="F:metal ion binding"/>
    <property type="evidence" value="ECO:0007669"/>
    <property type="project" value="UniProtKB-KW"/>
</dbReference>
<dbReference type="GO" id="GO:0004222">
    <property type="term" value="F:metalloendopeptidase activity"/>
    <property type="evidence" value="ECO:0000318"/>
    <property type="project" value="GO_Central"/>
</dbReference>
<dbReference type="GO" id="GO:0006627">
    <property type="term" value="P:protein processing involved in protein targeting to mitochondrion"/>
    <property type="evidence" value="ECO:0000318"/>
    <property type="project" value="GO_Central"/>
</dbReference>
<dbReference type="FunFam" id="3.30.830.10:FF:000002">
    <property type="entry name" value="Mitochondrial-processing peptidase subunit beta"/>
    <property type="match status" value="1"/>
</dbReference>
<dbReference type="FunFam" id="3.30.830.10:FF:000001">
    <property type="entry name" value="Mitochondrial-processing peptidase subunit beta, mitochondrial"/>
    <property type="match status" value="1"/>
</dbReference>
<dbReference type="Gene3D" id="3.30.830.10">
    <property type="entry name" value="Metalloenzyme, LuxS/M16 peptidase-like"/>
    <property type="match status" value="2"/>
</dbReference>
<dbReference type="InterPro" id="IPR011249">
    <property type="entry name" value="Metalloenz_LuxS/M16"/>
</dbReference>
<dbReference type="InterPro" id="IPR050361">
    <property type="entry name" value="MPP/UQCRC_Complex"/>
</dbReference>
<dbReference type="InterPro" id="IPR011765">
    <property type="entry name" value="Pept_M16_N"/>
</dbReference>
<dbReference type="InterPro" id="IPR001431">
    <property type="entry name" value="Pept_M16_Zn_BS"/>
</dbReference>
<dbReference type="InterPro" id="IPR007863">
    <property type="entry name" value="Peptidase_M16_C"/>
</dbReference>
<dbReference type="PANTHER" id="PTHR11851">
    <property type="entry name" value="METALLOPROTEASE"/>
    <property type="match status" value="1"/>
</dbReference>
<dbReference type="PANTHER" id="PTHR11851:SF103">
    <property type="entry name" value="MITOCHONDRIAL-PROCESSING PEPTIDASE SUBUNIT BETA"/>
    <property type="match status" value="1"/>
</dbReference>
<dbReference type="Pfam" id="PF00675">
    <property type="entry name" value="Peptidase_M16"/>
    <property type="match status" value="1"/>
</dbReference>
<dbReference type="Pfam" id="PF05193">
    <property type="entry name" value="Peptidase_M16_C"/>
    <property type="match status" value="1"/>
</dbReference>
<dbReference type="SUPFAM" id="SSF63411">
    <property type="entry name" value="LuxS/MPP-like metallohydrolase"/>
    <property type="match status" value="2"/>
</dbReference>
<dbReference type="PROSITE" id="PS00143">
    <property type="entry name" value="INSULINASE"/>
    <property type="match status" value="1"/>
</dbReference>
<reference key="1">
    <citation type="submission" date="2005-08" db="EMBL/GenBank/DDBJ databases">
        <authorList>
            <consortium name="NIH - Mammalian Gene Collection (MGC) project"/>
        </authorList>
    </citation>
    <scope>NUCLEOTIDE SEQUENCE [LARGE SCALE MRNA]</scope>
    <source>
        <strain>Crossbred X Angus</strain>
        <tissue>Ileum</tissue>
    </source>
</reference>
<keyword id="KW-0378">Hydrolase</keyword>
<keyword id="KW-0479">Metal-binding</keyword>
<keyword id="KW-0482">Metalloprotease</keyword>
<keyword id="KW-0496">Mitochondrion</keyword>
<keyword id="KW-0645">Protease</keyword>
<keyword id="KW-1185">Reference proteome</keyword>
<keyword id="KW-0809">Transit peptide</keyword>
<keyword id="KW-0862">Zinc</keyword>
<feature type="transit peptide" description="Mitochondrion" evidence="1">
    <location>
        <begin position="1"/>
        <end position="46"/>
    </location>
</feature>
<feature type="chain" id="PRO_0000045850" description="Mitochondrial-processing peptidase subunit beta">
    <location>
        <begin position="47"/>
        <end position="490"/>
    </location>
</feature>
<feature type="active site" description="Proton acceptor" evidence="4">
    <location>
        <position position="105"/>
    </location>
</feature>
<feature type="binding site" evidence="4">
    <location>
        <position position="102"/>
    </location>
    <ligand>
        <name>Zn(2+)</name>
        <dbReference type="ChEBI" id="CHEBI:29105"/>
    </ligand>
</feature>
<feature type="binding site" evidence="4">
    <location>
        <position position="106"/>
    </location>
    <ligand>
        <name>Zn(2+)</name>
        <dbReference type="ChEBI" id="CHEBI:29105"/>
    </ligand>
</feature>
<feature type="binding site" evidence="4">
    <location>
        <position position="182"/>
    </location>
    <ligand>
        <name>Zn(2+)</name>
        <dbReference type="ChEBI" id="CHEBI:29105"/>
    </ligand>
</feature>
<feature type="site" description="Required for the specific determination of the substrate cleavage site" evidence="3">
    <location>
        <position position="192"/>
    </location>
</feature>
<feature type="site" description="Required for the specific determination of the substrate cleavage site" evidence="3">
    <location>
        <position position="196"/>
    </location>
</feature>
<protein>
    <recommendedName>
        <fullName>Mitochondrial-processing peptidase subunit beta</fullName>
        <ecNumber evidence="3">3.4.24.64</ecNumber>
    </recommendedName>
    <alternativeName>
        <fullName>Beta-MPP</fullName>
    </alternativeName>
</protein>
<sequence length="490" mass="54237">MAAAAVARAVLFSAARRRLCGFTERLLIGGAAGRSLYFGGNRLRSTQAAAQVVLNVPETRVTCLENGLRVASEDSGLATCTVGLWIDAGSRYENEKNNGTAHFLEHMAFKGTKKRSQLDLELEIENMGAHLNAYTSREQTVYYAKAFSKDLPRAVEILADIIQNSTLGEAEIERERGVILREMQEVETNLQEVVFDYLHATAYQNTALGRTILGPTENIKSINRKDLVDYITTHYKGPRIVLAAAGGVSHDELLELAKFHFGESLSTHKGEIPALPPCKFTGSEIRVRDDKMPLAHLAVAVEAVGWAHPDTICLMVANTLIGNWDRSFGGGMNLSSKLAQLTCHGNLCHSFQSFNTSYTDTGLWGIYMVCEPATVADMLHVVQKEWMRLCTSVTESEVARAKNLLKTNMLLQLDGSTPICEDIGRQMLCYNRRIPIPELEARIDAVNAEIIREVCTKYIYDKSPAVAAVGPIEQLPDFNQICSNMRWLHD</sequence>